<feature type="chain" id="PRO_0000059617" description="DNA ligase">
    <location>
        <begin position="1"/>
        <end position="601"/>
    </location>
</feature>
<feature type="active site" description="N6-AMP-lysine intermediate" evidence="1">
    <location>
        <position position="260"/>
    </location>
</feature>
<feature type="binding site" evidence="1">
    <location>
        <position position="258"/>
    </location>
    <ligand>
        <name>ATP</name>
        <dbReference type="ChEBI" id="CHEBI:30616"/>
    </ligand>
</feature>
<feature type="binding site" evidence="1">
    <location>
        <position position="265"/>
    </location>
    <ligand>
        <name>ATP</name>
        <dbReference type="ChEBI" id="CHEBI:30616"/>
    </ligand>
</feature>
<feature type="binding site" evidence="1">
    <location>
        <position position="280"/>
    </location>
    <ligand>
        <name>ATP</name>
        <dbReference type="ChEBI" id="CHEBI:30616"/>
    </ligand>
</feature>
<feature type="binding site" evidence="1">
    <location>
        <position position="310"/>
    </location>
    <ligand>
        <name>ATP</name>
        <dbReference type="ChEBI" id="CHEBI:30616"/>
    </ligand>
</feature>
<feature type="binding site" evidence="1">
    <location>
        <position position="350"/>
    </location>
    <ligand>
        <name>ATP</name>
        <dbReference type="ChEBI" id="CHEBI:30616"/>
    </ligand>
</feature>
<feature type="binding site" evidence="1">
    <location>
        <position position="427"/>
    </location>
    <ligand>
        <name>ATP</name>
        <dbReference type="ChEBI" id="CHEBI:30616"/>
    </ligand>
</feature>
<feature type="binding site" evidence="1">
    <location>
        <position position="433"/>
    </location>
    <ligand>
        <name>ATP</name>
        <dbReference type="ChEBI" id="CHEBI:30616"/>
    </ligand>
</feature>
<dbReference type="EC" id="6.5.1.1" evidence="1 2"/>
<dbReference type="EMBL" id="AF242877">
    <property type="protein sequence ID" value="AAF61267.1"/>
    <property type="molecule type" value="Genomic_DNA"/>
</dbReference>
<dbReference type="EMBL" id="CP077717">
    <property type="protein sequence ID" value="QXJ27210.1"/>
    <property type="molecule type" value="Genomic_DNA"/>
</dbReference>
<dbReference type="RefSeq" id="WP_218266613.1">
    <property type="nucleotide sequence ID" value="NZ_CP077717.1"/>
</dbReference>
<dbReference type="SMR" id="Q9P9K9"/>
<dbReference type="GeneID" id="65561690"/>
<dbReference type="KEGG" id="sshi:J5U23_00068"/>
<dbReference type="OrthoDB" id="31274at2157"/>
<dbReference type="Proteomes" id="UP000694018">
    <property type="component" value="Chromosome"/>
</dbReference>
<dbReference type="GO" id="GO:0005524">
    <property type="term" value="F:ATP binding"/>
    <property type="evidence" value="ECO:0007669"/>
    <property type="project" value="UniProtKB-UniRule"/>
</dbReference>
<dbReference type="GO" id="GO:0003677">
    <property type="term" value="F:DNA binding"/>
    <property type="evidence" value="ECO:0007669"/>
    <property type="project" value="InterPro"/>
</dbReference>
<dbReference type="GO" id="GO:0003910">
    <property type="term" value="F:DNA ligase (ATP) activity"/>
    <property type="evidence" value="ECO:0007669"/>
    <property type="project" value="UniProtKB-UniRule"/>
</dbReference>
<dbReference type="GO" id="GO:0046872">
    <property type="term" value="F:metal ion binding"/>
    <property type="evidence" value="ECO:0007669"/>
    <property type="project" value="UniProtKB-KW"/>
</dbReference>
<dbReference type="GO" id="GO:0051301">
    <property type="term" value="P:cell division"/>
    <property type="evidence" value="ECO:0007669"/>
    <property type="project" value="UniProtKB-KW"/>
</dbReference>
<dbReference type="GO" id="GO:0071897">
    <property type="term" value="P:DNA biosynthetic process"/>
    <property type="evidence" value="ECO:0007669"/>
    <property type="project" value="InterPro"/>
</dbReference>
<dbReference type="GO" id="GO:0006310">
    <property type="term" value="P:DNA recombination"/>
    <property type="evidence" value="ECO:0007669"/>
    <property type="project" value="UniProtKB-UniRule"/>
</dbReference>
<dbReference type="GO" id="GO:0006281">
    <property type="term" value="P:DNA repair"/>
    <property type="evidence" value="ECO:0007669"/>
    <property type="project" value="UniProtKB-UniRule"/>
</dbReference>
<dbReference type="GO" id="GO:0006273">
    <property type="term" value="P:lagging strand elongation"/>
    <property type="evidence" value="ECO:0007669"/>
    <property type="project" value="TreeGrafter"/>
</dbReference>
<dbReference type="CDD" id="cd07901">
    <property type="entry name" value="Adenylation_DNA_ligase_Arch_LigB"/>
    <property type="match status" value="1"/>
</dbReference>
<dbReference type="CDD" id="cd07969">
    <property type="entry name" value="OBF_DNA_ligase_I"/>
    <property type="match status" value="1"/>
</dbReference>
<dbReference type="FunFam" id="1.10.3260.10:FF:000007">
    <property type="entry name" value="DNA ligase"/>
    <property type="match status" value="1"/>
</dbReference>
<dbReference type="FunFam" id="2.40.50.140:FF:000062">
    <property type="entry name" value="DNA ligase"/>
    <property type="match status" value="1"/>
</dbReference>
<dbReference type="FunFam" id="3.30.470.30:FF:000012">
    <property type="entry name" value="Probable DNA ligase"/>
    <property type="match status" value="1"/>
</dbReference>
<dbReference type="Gene3D" id="1.10.3260.10">
    <property type="entry name" value="DNA ligase, ATP-dependent, N-terminal domain"/>
    <property type="match status" value="1"/>
</dbReference>
<dbReference type="Gene3D" id="3.30.470.30">
    <property type="entry name" value="DNA ligase/mRNA capping enzyme"/>
    <property type="match status" value="1"/>
</dbReference>
<dbReference type="Gene3D" id="2.40.50.140">
    <property type="entry name" value="Nucleic acid-binding proteins"/>
    <property type="match status" value="1"/>
</dbReference>
<dbReference type="HAMAP" id="MF_00407">
    <property type="entry name" value="DNA_ligase"/>
    <property type="match status" value="1"/>
</dbReference>
<dbReference type="InterPro" id="IPR050191">
    <property type="entry name" value="ATP-dep_DNA_ligase"/>
</dbReference>
<dbReference type="InterPro" id="IPR022865">
    <property type="entry name" value="DNA_ligae_ATP-dep_bac/arc"/>
</dbReference>
<dbReference type="InterPro" id="IPR000977">
    <property type="entry name" value="DNA_ligase_ATP-dep"/>
</dbReference>
<dbReference type="InterPro" id="IPR012309">
    <property type="entry name" value="DNA_ligase_ATP-dep_C"/>
</dbReference>
<dbReference type="InterPro" id="IPR012310">
    <property type="entry name" value="DNA_ligase_ATP-dep_cent"/>
</dbReference>
<dbReference type="InterPro" id="IPR016059">
    <property type="entry name" value="DNA_ligase_ATP-dep_CS"/>
</dbReference>
<dbReference type="InterPro" id="IPR012308">
    <property type="entry name" value="DNA_ligase_ATP-dep_N"/>
</dbReference>
<dbReference type="InterPro" id="IPR036599">
    <property type="entry name" value="DNA_ligase_N_sf"/>
</dbReference>
<dbReference type="InterPro" id="IPR012340">
    <property type="entry name" value="NA-bd_OB-fold"/>
</dbReference>
<dbReference type="NCBIfam" id="TIGR00574">
    <property type="entry name" value="dnl1"/>
    <property type="match status" value="1"/>
</dbReference>
<dbReference type="PANTHER" id="PTHR45674:SF4">
    <property type="entry name" value="DNA LIGASE 1"/>
    <property type="match status" value="1"/>
</dbReference>
<dbReference type="PANTHER" id="PTHR45674">
    <property type="entry name" value="DNA LIGASE 1/3 FAMILY MEMBER"/>
    <property type="match status" value="1"/>
</dbReference>
<dbReference type="Pfam" id="PF04679">
    <property type="entry name" value="DNA_ligase_A_C"/>
    <property type="match status" value="1"/>
</dbReference>
<dbReference type="Pfam" id="PF01068">
    <property type="entry name" value="DNA_ligase_A_M"/>
    <property type="match status" value="1"/>
</dbReference>
<dbReference type="Pfam" id="PF04675">
    <property type="entry name" value="DNA_ligase_A_N"/>
    <property type="match status" value="1"/>
</dbReference>
<dbReference type="SUPFAM" id="SSF117018">
    <property type="entry name" value="ATP-dependent DNA ligase DNA-binding domain"/>
    <property type="match status" value="1"/>
</dbReference>
<dbReference type="SUPFAM" id="SSF56091">
    <property type="entry name" value="DNA ligase/mRNA capping enzyme, catalytic domain"/>
    <property type="match status" value="1"/>
</dbReference>
<dbReference type="SUPFAM" id="SSF50249">
    <property type="entry name" value="Nucleic acid-binding proteins"/>
    <property type="match status" value="1"/>
</dbReference>
<dbReference type="PROSITE" id="PS00697">
    <property type="entry name" value="DNA_LIGASE_A1"/>
    <property type="match status" value="1"/>
</dbReference>
<dbReference type="PROSITE" id="PS00333">
    <property type="entry name" value="DNA_LIGASE_A2"/>
    <property type="match status" value="1"/>
</dbReference>
<dbReference type="PROSITE" id="PS50160">
    <property type="entry name" value="DNA_LIGASE_A3"/>
    <property type="match status" value="1"/>
</dbReference>
<sequence>MEFKVIAEYFDKLEKISSRLQLTALLADLLSKSDKAIIDKVVYIIQGKLWPDFLGYPELGIGEKFLIKAISIATNTDENSVENLYKSTGDLGEVARRLKSKQQSTGILGFLGTSSKESLTVDEVYSTLSKVALTTGEGSRDLKIRLLAGLLKKADPLEAKFLVRFVEGRLRVGIGDATVLDAMAIAFGGGQSASEIVERAYNLRADLGNIAKIIVEKGIEALKTLKPEVGIPIRPMLAERLSNPEEILKKVGGSALVDYKYDGERAQIHKKSDKIFIFSRRLENITSQYPDVVEYISKYVEGKEFIIEGEIVAVDPESGEMRAFQELMHRKRKSDIYEAIKEYPVNVFLFDLMYYEDVDYTTKPLEVRRKLLESIVKPNDYVKIAHHIQVNNVEDLKSFFYRAISEGGEGVMVKAIGKDAIYQAGARGWLWIKLKRDYQSEMADTVDLVVVGGFYGKGKRGGKISSLLMAAYNPKTDTFESVCKVASGFSDEQLDELQKKLMEIKRDIKHPRVNSKMEPDIWIEPVYVAEIIGAEITISPLHTCCQDVVEKDAGLSIRFPRFIRWRDDKSPEDATTTDEILEMYNKQPKKKIESPLVDESV</sequence>
<protein>
    <recommendedName>
        <fullName evidence="1 3">DNA ligase</fullName>
        <ecNumber evidence="1 2">6.5.1.1</ecNumber>
    </recommendedName>
    <alternativeName>
        <fullName evidence="1 4">Polydeoxyribonucleotide synthase [ATP]</fullName>
    </alternativeName>
</protein>
<evidence type="ECO:0000255" key="1">
    <source>
        <dbReference type="HAMAP-Rule" id="MF_00407"/>
    </source>
</evidence>
<evidence type="ECO:0000269" key="2">
    <source>
    </source>
</evidence>
<evidence type="ECO:0000303" key="3">
    <source>
    </source>
</evidence>
<evidence type="ECO:0000305" key="4"/>
<evidence type="ECO:0000312" key="5">
    <source>
        <dbReference type="EMBL" id="QXJ27210.1"/>
    </source>
</evidence>
<keyword id="KW-0067">ATP-binding</keyword>
<keyword id="KW-0131">Cell cycle</keyword>
<keyword id="KW-0132">Cell division</keyword>
<keyword id="KW-0903">Direct protein sequencing</keyword>
<keyword id="KW-0227">DNA damage</keyword>
<keyword id="KW-0233">DNA recombination</keyword>
<keyword id="KW-0234">DNA repair</keyword>
<keyword id="KW-0235">DNA replication</keyword>
<keyword id="KW-0436">Ligase</keyword>
<keyword id="KW-0460">Magnesium</keyword>
<keyword id="KW-0479">Metal-binding</keyword>
<keyword id="KW-0547">Nucleotide-binding</keyword>
<comment type="function">
    <text evidence="2">DNA ligase that seals nicks in double-stranded DNA during DNA replication, DNA recombination and DNA repair. Also has low activity with dATP. Inactive with NAD(+), CTP, GTP, UTP, dCTP, dGTP or dTTP.</text>
</comment>
<comment type="catalytic activity">
    <reaction evidence="1 2">
        <text>ATP + (deoxyribonucleotide)n-3'-hydroxyl + 5'-phospho-(deoxyribonucleotide)m = (deoxyribonucleotide)n+m + AMP + diphosphate.</text>
        <dbReference type="EC" id="6.5.1.1"/>
    </reaction>
</comment>
<comment type="cofactor">
    <cofactor evidence="2">
        <name>Mg(2+)</name>
        <dbReference type="ChEBI" id="CHEBI:18420"/>
    </cofactor>
    <cofactor evidence="2">
        <name>Ca(2+)</name>
        <dbReference type="ChEBI" id="CHEBI:29108"/>
    </cofactor>
    <cofactor evidence="2">
        <name>Mn(2+)</name>
        <dbReference type="ChEBI" id="CHEBI:29035"/>
    </cofactor>
</comment>
<comment type="biophysicochemical properties">
    <kinetics>
        <KM evidence="2">34 uM for ATP</KM>
    </kinetics>
    <phDependence>
        <text evidence="2">Optimum pH is 6.0-7.0.</text>
    </phDependence>
    <temperatureDependence>
        <text evidence="2">Optimum temperature is 60-80 degrees Celsius.</text>
    </temperatureDependence>
</comment>
<comment type="similarity">
    <text evidence="1 4">Belongs to the ATP-dependent DNA ligase family.</text>
</comment>
<gene>
    <name evidence="1" type="primary">lig</name>
    <name evidence="5" type="ORF">J5U23_00068</name>
</gene>
<organism>
    <name type="scientific">Saccharolobus shibatae (strain ATCC 51178 / DSM 5389 / JCM 8931 / NBRC 15437 / B12)</name>
    <name type="common">Sulfolobus shibatae</name>
    <dbReference type="NCBI Taxonomy" id="523848"/>
    <lineage>
        <taxon>Archaea</taxon>
        <taxon>Thermoproteota</taxon>
        <taxon>Thermoprotei</taxon>
        <taxon>Sulfolobales</taxon>
        <taxon>Sulfolobaceae</taxon>
        <taxon>Saccharolobus</taxon>
    </lineage>
</organism>
<reference key="1">
    <citation type="journal article" date="2002" name="Extremophiles">
        <title>Biochemical characterization of an ATP-dependent DNA ligase from the hyperthermophilic crenarchaeon Sulfolobus shibatae.</title>
        <authorList>
            <person name="Lai X."/>
            <person name="Shao H."/>
            <person name="Hao F."/>
            <person name="Huang L."/>
        </authorList>
    </citation>
    <scope>NUCLEOTIDE SEQUENCE [GENOMIC DNA]</scope>
    <scope>PROTEIN SEQUENCE OF 1-5</scope>
    <scope>FUNCTION</scope>
    <scope>CATALYTIC ACTIVITY</scope>
    <scope>COFACTOR</scope>
    <scope>BIOPHYSICOCHEMICAL PROPERTIES</scope>
    <source>
        <strain>ATCC 51178 / DSM 5389 / JCM 8931 / NBRC 15437 / B12</strain>
    </source>
</reference>
<reference evidence="5" key="2">
    <citation type="journal article" date="2021" name="Environ. Microbiol.">
        <title>New insights into the diversity and evolution of the archaeal mobilome from three complete genomes of Saccharolobus shibatae.</title>
        <authorList>
            <person name="Medvedeva S."/>
            <person name="Brandt D."/>
            <person name="Cvirkaite-Krupovic V."/>
            <person name="Liu Y."/>
            <person name="Severinov K."/>
            <person name="Ishino S."/>
            <person name="Ishino Y."/>
            <person name="Prangishvili D."/>
            <person name="Kalinowski J."/>
            <person name="Krupovic M."/>
        </authorList>
    </citation>
    <scope>NUCLEOTIDE SEQUENCE [LARGE SCALE GENOMIC DNA]</scope>
    <source>
        <strain>ATCC 51178 / DSM 5389 / JCM 8931 / NBRC 15437 / B12</strain>
    </source>
</reference>
<accession>Q9P9K9</accession>
<accession>A0A8F5GRS7</accession>
<proteinExistence type="evidence at protein level"/>
<name>DNLI_SACSH</name>